<gene>
    <name type="primary">yceJ</name>
    <name type="ordered locus">BSU02960</name>
</gene>
<name>YCEJ_BACSU</name>
<comment type="subcellular location">
    <subcellularLocation>
        <location evidence="2">Cell membrane</location>
        <topology evidence="2">Multi-pass membrane protein</topology>
    </subcellularLocation>
</comment>
<comment type="similarity">
    <text evidence="2">Belongs to the major facilitator superfamily.</text>
</comment>
<dbReference type="EMBL" id="AB000617">
    <property type="protein sequence ID" value="BAA22257.1"/>
    <property type="molecule type" value="Genomic_DNA"/>
</dbReference>
<dbReference type="EMBL" id="AL009126">
    <property type="protein sequence ID" value="CAB12090.1"/>
    <property type="molecule type" value="Genomic_DNA"/>
</dbReference>
<dbReference type="PIR" id="D69757">
    <property type="entry name" value="D69757"/>
</dbReference>
<dbReference type="RefSeq" id="NP_388178.1">
    <property type="nucleotide sequence ID" value="NC_000964.3"/>
</dbReference>
<dbReference type="RefSeq" id="WP_003246304.1">
    <property type="nucleotide sequence ID" value="NZ_OZ025638.1"/>
</dbReference>
<dbReference type="SMR" id="O34724"/>
<dbReference type="FunCoup" id="O34724">
    <property type="interactions" value="207"/>
</dbReference>
<dbReference type="STRING" id="224308.BSU02960"/>
<dbReference type="PaxDb" id="224308-BSU02960"/>
<dbReference type="EnsemblBacteria" id="CAB12090">
    <property type="protein sequence ID" value="CAB12090"/>
    <property type="gene ID" value="BSU_02960"/>
</dbReference>
<dbReference type="GeneID" id="938363"/>
<dbReference type="KEGG" id="bsu:BSU02960"/>
<dbReference type="PATRIC" id="fig|224308.179.peg.308"/>
<dbReference type="eggNOG" id="COG2814">
    <property type="taxonomic scope" value="Bacteria"/>
</dbReference>
<dbReference type="InParanoid" id="O34724"/>
<dbReference type="OrthoDB" id="212436at2"/>
<dbReference type="PhylomeDB" id="O34724"/>
<dbReference type="BioCyc" id="BSUB:BSU02960-MONOMER"/>
<dbReference type="Proteomes" id="UP000001570">
    <property type="component" value="Chromosome"/>
</dbReference>
<dbReference type="GO" id="GO:0016020">
    <property type="term" value="C:membrane"/>
    <property type="evidence" value="ECO:0000318"/>
    <property type="project" value="GO_Central"/>
</dbReference>
<dbReference type="GO" id="GO:0005886">
    <property type="term" value="C:plasma membrane"/>
    <property type="evidence" value="ECO:0007669"/>
    <property type="project" value="UniProtKB-SubCell"/>
</dbReference>
<dbReference type="GO" id="GO:0022857">
    <property type="term" value="F:transmembrane transporter activity"/>
    <property type="evidence" value="ECO:0007669"/>
    <property type="project" value="InterPro"/>
</dbReference>
<dbReference type="CDD" id="cd17324">
    <property type="entry name" value="MFS_NepI_like"/>
    <property type="match status" value="1"/>
</dbReference>
<dbReference type="Gene3D" id="1.20.1250.20">
    <property type="entry name" value="MFS general substrate transporter like domains"/>
    <property type="match status" value="1"/>
</dbReference>
<dbReference type="InterPro" id="IPR011701">
    <property type="entry name" value="MFS"/>
</dbReference>
<dbReference type="InterPro" id="IPR020846">
    <property type="entry name" value="MFS_dom"/>
</dbReference>
<dbReference type="InterPro" id="IPR050189">
    <property type="entry name" value="MFS_Efflux_Transporters"/>
</dbReference>
<dbReference type="InterPro" id="IPR036259">
    <property type="entry name" value="MFS_trans_sf"/>
</dbReference>
<dbReference type="InterPro" id="IPR001958">
    <property type="entry name" value="Tet-R_TetA/multi-R_MdtG-like"/>
</dbReference>
<dbReference type="PANTHER" id="PTHR43124:SF3">
    <property type="entry name" value="CHLORAMPHENICOL EFFLUX PUMP RV0191"/>
    <property type="match status" value="1"/>
</dbReference>
<dbReference type="PANTHER" id="PTHR43124">
    <property type="entry name" value="PURINE EFFLUX PUMP PBUE"/>
    <property type="match status" value="1"/>
</dbReference>
<dbReference type="Pfam" id="PF07690">
    <property type="entry name" value="MFS_1"/>
    <property type="match status" value="2"/>
</dbReference>
<dbReference type="PRINTS" id="PR01035">
    <property type="entry name" value="TCRTETA"/>
</dbReference>
<dbReference type="SUPFAM" id="SSF103473">
    <property type="entry name" value="MFS general substrate transporter"/>
    <property type="match status" value="1"/>
</dbReference>
<dbReference type="PROSITE" id="PS50850">
    <property type="entry name" value="MFS"/>
    <property type="match status" value="1"/>
</dbReference>
<sequence>MNRIWLFFSVMFVIGTDTFLLSPLLPLLQDQFHVSTDLSGWMVSAYALGYALFAFIAGPISDRLNRKTVMLWGLAGFIVSTFLCGIAPSFAAMCLFRFAAGVSAAFVTPQIWASIPVIVQPSQIIKGMGIATAGLAASQMLGLPIGGFLASFTWHTPFFVLSACSLILLLILAAVMPGIRPSEPLARPSIVNPYRELFSLPKTSVILLAYFLFQTGNFASFSFLGTWLSADYHLTVSQIGAAMLVLGLGNMLGSLIGSRVSEKLGMFKTLISGMLLMGALYFALPFFPNLFLVEAGFFLTFFTAGIIFPLMMGVFQSIAPNARGTIASLSNAAMYAGTTVGTSIAGFLYQSTQHFGAVTGFTAILFILSMTLYQTISKTGKRQSTARAQL</sequence>
<organism>
    <name type="scientific">Bacillus subtilis (strain 168)</name>
    <dbReference type="NCBI Taxonomy" id="224308"/>
    <lineage>
        <taxon>Bacteria</taxon>
        <taxon>Bacillati</taxon>
        <taxon>Bacillota</taxon>
        <taxon>Bacilli</taxon>
        <taxon>Bacillales</taxon>
        <taxon>Bacillaceae</taxon>
        <taxon>Bacillus</taxon>
    </lineage>
</organism>
<proteinExistence type="inferred from homology"/>
<accession>O34724</accession>
<accession>Q797R2</accession>
<keyword id="KW-1003">Cell membrane</keyword>
<keyword id="KW-0472">Membrane</keyword>
<keyword id="KW-1185">Reference proteome</keyword>
<keyword id="KW-0812">Transmembrane</keyword>
<keyword id="KW-1133">Transmembrane helix</keyword>
<keyword id="KW-0813">Transport</keyword>
<protein>
    <recommendedName>
        <fullName>Uncharacterized MFS-type transporter YceJ</fullName>
    </recommendedName>
</protein>
<feature type="chain" id="PRO_0000359518" description="Uncharacterized MFS-type transporter YceJ">
    <location>
        <begin position="1"/>
        <end position="390"/>
    </location>
</feature>
<feature type="transmembrane region" description="Helical" evidence="1">
    <location>
        <begin position="4"/>
        <end position="24"/>
    </location>
</feature>
<feature type="transmembrane region" description="Helical" evidence="1">
    <location>
        <begin position="40"/>
        <end position="60"/>
    </location>
</feature>
<feature type="transmembrane region" description="Helical" evidence="1">
    <location>
        <begin position="68"/>
        <end position="88"/>
    </location>
</feature>
<feature type="transmembrane region" description="Helical" evidence="1">
    <location>
        <begin position="98"/>
        <end position="118"/>
    </location>
</feature>
<feature type="transmembrane region" description="Helical" evidence="1">
    <location>
        <begin position="130"/>
        <end position="150"/>
    </location>
</feature>
<feature type="transmembrane region" description="Helical" evidence="1">
    <location>
        <begin position="159"/>
        <end position="179"/>
    </location>
</feature>
<feature type="transmembrane region" description="Helical" evidence="1">
    <location>
        <begin position="205"/>
        <end position="225"/>
    </location>
</feature>
<feature type="transmembrane region" description="Helical" evidence="1">
    <location>
        <begin position="236"/>
        <end position="256"/>
    </location>
</feature>
<feature type="transmembrane region" description="Helical" evidence="1">
    <location>
        <begin position="273"/>
        <end position="293"/>
    </location>
</feature>
<feature type="transmembrane region" description="Helical" evidence="1">
    <location>
        <begin position="295"/>
        <end position="315"/>
    </location>
</feature>
<feature type="transmembrane region" description="Helical" evidence="1">
    <location>
        <begin position="329"/>
        <end position="349"/>
    </location>
</feature>
<feature type="transmembrane region" description="Helical" evidence="1">
    <location>
        <begin position="356"/>
        <end position="376"/>
    </location>
</feature>
<reference key="1">
    <citation type="journal article" date="1997" name="Microbiology">
        <title>A 32 kb nucleotide sequence from the region of the lincomycin-resistance gene (22 degrees-25 degrees) of the Bacillus subtilis chromosome and identification of the site of the lin-2 mutation.</title>
        <authorList>
            <person name="Kumano M."/>
            <person name="Tamakoshi A."/>
            <person name="Yamane K."/>
        </authorList>
    </citation>
    <scope>NUCLEOTIDE SEQUENCE [GENOMIC DNA]</scope>
    <source>
        <strain>168</strain>
    </source>
</reference>
<reference key="2">
    <citation type="journal article" date="1997" name="Nature">
        <title>The complete genome sequence of the Gram-positive bacterium Bacillus subtilis.</title>
        <authorList>
            <person name="Kunst F."/>
            <person name="Ogasawara N."/>
            <person name="Moszer I."/>
            <person name="Albertini A.M."/>
            <person name="Alloni G."/>
            <person name="Azevedo V."/>
            <person name="Bertero M.G."/>
            <person name="Bessieres P."/>
            <person name="Bolotin A."/>
            <person name="Borchert S."/>
            <person name="Borriss R."/>
            <person name="Boursier L."/>
            <person name="Brans A."/>
            <person name="Braun M."/>
            <person name="Brignell S.C."/>
            <person name="Bron S."/>
            <person name="Brouillet S."/>
            <person name="Bruschi C.V."/>
            <person name="Caldwell B."/>
            <person name="Capuano V."/>
            <person name="Carter N.M."/>
            <person name="Choi S.-K."/>
            <person name="Codani J.-J."/>
            <person name="Connerton I.F."/>
            <person name="Cummings N.J."/>
            <person name="Daniel R.A."/>
            <person name="Denizot F."/>
            <person name="Devine K.M."/>
            <person name="Duesterhoeft A."/>
            <person name="Ehrlich S.D."/>
            <person name="Emmerson P.T."/>
            <person name="Entian K.-D."/>
            <person name="Errington J."/>
            <person name="Fabret C."/>
            <person name="Ferrari E."/>
            <person name="Foulger D."/>
            <person name="Fritz C."/>
            <person name="Fujita M."/>
            <person name="Fujita Y."/>
            <person name="Fuma S."/>
            <person name="Galizzi A."/>
            <person name="Galleron N."/>
            <person name="Ghim S.-Y."/>
            <person name="Glaser P."/>
            <person name="Goffeau A."/>
            <person name="Golightly E.J."/>
            <person name="Grandi G."/>
            <person name="Guiseppi G."/>
            <person name="Guy B.J."/>
            <person name="Haga K."/>
            <person name="Haiech J."/>
            <person name="Harwood C.R."/>
            <person name="Henaut A."/>
            <person name="Hilbert H."/>
            <person name="Holsappel S."/>
            <person name="Hosono S."/>
            <person name="Hullo M.-F."/>
            <person name="Itaya M."/>
            <person name="Jones L.-M."/>
            <person name="Joris B."/>
            <person name="Karamata D."/>
            <person name="Kasahara Y."/>
            <person name="Klaerr-Blanchard M."/>
            <person name="Klein C."/>
            <person name="Kobayashi Y."/>
            <person name="Koetter P."/>
            <person name="Koningstein G."/>
            <person name="Krogh S."/>
            <person name="Kumano M."/>
            <person name="Kurita K."/>
            <person name="Lapidus A."/>
            <person name="Lardinois S."/>
            <person name="Lauber J."/>
            <person name="Lazarevic V."/>
            <person name="Lee S.-M."/>
            <person name="Levine A."/>
            <person name="Liu H."/>
            <person name="Masuda S."/>
            <person name="Mauel C."/>
            <person name="Medigue C."/>
            <person name="Medina N."/>
            <person name="Mellado R.P."/>
            <person name="Mizuno M."/>
            <person name="Moestl D."/>
            <person name="Nakai S."/>
            <person name="Noback M."/>
            <person name="Noone D."/>
            <person name="O'Reilly M."/>
            <person name="Ogawa K."/>
            <person name="Ogiwara A."/>
            <person name="Oudega B."/>
            <person name="Park S.-H."/>
            <person name="Parro V."/>
            <person name="Pohl T.M."/>
            <person name="Portetelle D."/>
            <person name="Porwollik S."/>
            <person name="Prescott A.M."/>
            <person name="Presecan E."/>
            <person name="Pujic P."/>
            <person name="Purnelle B."/>
            <person name="Rapoport G."/>
            <person name="Rey M."/>
            <person name="Reynolds S."/>
            <person name="Rieger M."/>
            <person name="Rivolta C."/>
            <person name="Rocha E."/>
            <person name="Roche B."/>
            <person name="Rose M."/>
            <person name="Sadaie Y."/>
            <person name="Sato T."/>
            <person name="Scanlan E."/>
            <person name="Schleich S."/>
            <person name="Schroeter R."/>
            <person name="Scoffone F."/>
            <person name="Sekiguchi J."/>
            <person name="Sekowska A."/>
            <person name="Seror S.J."/>
            <person name="Serror P."/>
            <person name="Shin B.-S."/>
            <person name="Soldo B."/>
            <person name="Sorokin A."/>
            <person name="Tacconi E."/>
            <person name="Takagi T."/>
            <person name="Takahashi H."/>
            <person name="Takemaru K."/>
            <person name="Takeuchi M."/>
            <person name="Tamakoshi A."/>
            <person name="Tanaka T."/>
            <person name="Terpstra P."/>
            <person name="Tognoni A."/>
            <person name="Tosato V."/>
            <person name="Uchiyama S."/>
            <person name="Vandenbol M."/>
            <person name="Vannier F."/>
            <person name="Vassarotti A."/>
            <person name="Viari A."/>
            <person name="Wambutt R."/>
            <person name="Wedler E."/>
            <person name="Wedler H."/>
            <person name="Weitzenegger T."/>
            <person name="Winters P."/>
            <person name="Wipat A."/>
            <person name="Yamamoto H."/>
            <person name="Yamane K."/>
            <person name="Yasumoto K."/>
            <person name="Yata K."/>
            <person name="Yoshida K."/>
            <person name="Yoshikawa H.-F."/>
            <person name="Zumstein E."/>
            <person name="Yoshikawa H."/>
            <person name="Danchin A."/>
        </authorList>
    </citation>
    <scope>NUCLEOTIDE SEQUENCE [LARGE SCALE GENOMIC DNA]</scope>
    <source>
        <strain>168</strain>
    </source>
</reference>
<evidence type="ECO:0000255" key="1"/>
<evidence type="ECO:0000305" key="2"/>